<sequence length="144" mass="15889">MGHSVLLINGPNLNLLGTREPHIYGHTTLKDLEESCKEHAQSLGAELQSFQSNAEGTIIDRIHEARGKIDVIIINPAGYTHTSVAIRDALAGVDIPFIELHISNTHTREKFRHHSYLSDKAAAVIMGFGVDGYKYAVDYAVRNL</sequence>
<comment type="function">
    <text evidence="1">Is involved in the catabolism of quinate. Allows the utilization of quinate as carbon source via the beta-ketoadipate pathway.</text>
</comment>
<comment type="catalytic activity">
    <reaction evidence="1">
        <text>3-dehydroquinate = 3-dehydroshikimate + H2O</text>
        <dbReference type="Rhea" id="RHEA:21096"/>
        <dbReference type="ChEBI" id="CHEBI:15377"/>
        <dbReference type="ChEBI" id="CHEBI:16630"/>
        <dbReference type="ChEBI" id="CHEBI:32364"/>
        <dbReference type="EC" id="4.2.1.10"/>
    </reaction>
</comment>
<comment type="pathway">
    <text evidence="1">Aromatic compound metabolism; 3,4-dihydroxybenzoate biosynthesis; 3,4-dihydroxybenzoate from 3-dehydroquinate: step 1/2.</text>
</comment>
<comment type="subunit">
    <text evidence="1">Homododecamer. Adopts a ring-like structure, composed of an arrangement of two hexameric rings stacked on top of one another.</text>
</comment>
<comment type="similarity">
    <text evidence="1">Belongs to the type-II 3-dehydroquinase family.</text>
</comment>
<dbReference type="EC" id="4.2.1.10" evidence="1"/>
<dbReference type="EMBL" id="GG698940">
    <property type="protein sequence ID" value="EEU35430.1"/>
    <property type="molecule type" value="Genomic_DNA"/>
</dbReference>
<dbReference type="RefSeq" id="XP_003041143.1">
    <property type="nucleotide sequence ID" value="XM_003041097.1"/>
</dbReference>
<dbReference type="SMR" id="C7ZKL6"/>
<dbReference type="STRING" id="660122.C7ZKL6"/>
<dbReference type="EnsemblFungi" id="NechaT51144">
    <property type="protein sequence ID" value="NechaP51144"/>
    <property type="gene ID" value="NechaG51144"/>
</dbReference>
<dbReference type="GeneID" id="9675703"/>
<dbReference type="KEGG" id="nhe:NECHADRAFT_51144"/>
<dbReference type="VEuPathDB" id="FungiDB:NECHADRAFT_51144"/>
<dbReference type="eggNOG" id="ENOG502S1A9">
    <property type="taxonomic scope" value="Eukaryota"/>
</dbReference>
<dbReference type="HOGENOM" id="CLU_090968_1_0_1"/>
<dbReference type="InParanoid" id="C7ZKL6"/>
<dbReference type="OMA" id="WIHEAGR"/>
<dbReference type="OrthoDB" id="8191625at2759"/>
<dbReference type="UniPathway" id="UPA00088">
    <property type="reaction ID" value="UER00178"/>
</dbReference>
<dbReference type="Proteomes" id="UP000005206">
    <property type="component" value="Unassembled WGS sequence"/>
</dbReference>
<dbReference type="GO" id="GO:0003855">
    <property type="term" value="F:3-dehydroquinate dehydratase activity"/>
    <property type="evidence" value="ECO:0007669"/>
    <property type="project" value="UniProtKB-UniRule"/>
</dbReference>
<dbReference type="GO" id="GO:0046279">
    <property type="term" value="P:3,4-dihydroxybenzoate biosynthetic process"/>
    <property type="evidence" value="ECO:0007669"/>
    <property type="project" value="UniProtKB-UniRule"/>
</dbReference>
<dbReference type="GO" id="GO:0019631">
    <property type="term" value="P:quinate catabolic process"/>
    <property type="evidence" value="ECO:0007669"/>
    <property type="project" value="TreeGrafter"/>
</dbReference>
<dbReference type="CDD" id="cd00466">
    <property type="entry name" value="DHQase_II"/>
    <property type="match status" value="1"/>
</dbReference>
<dbReference type="Gene3D" id="3.40.50.9100">
    <property type="entry name" value="Dehydroquinase, class II"/>
    <property type="match status" value="1"/>
</dbReference>
<dbReference type="HAMAP" id="MF_00169">
    <property type="entry name" value="AroQ"/>
    <property type="match status" value="1"/>
</dbReference>
<dbReference type="InterPro" id="IPR001874">
    <property type="entry name" value="DHquinase_II"/>
</dbReference>
<dbReference type="InterPro" id="IPR018509">
    <property type="entry name" value="DHquinase_II_CS"/>
</dbReference>
<dbReference type="InterPro" id="IPR036441">
    <property type="entry name" value="DHquinase_II_sf"/>
</dbReference>
<dbReference type="NCBIfam" id="TIGR01088">
    <property type="entry name" value="aroQ"/>
    <property type="match status" value="1"/>
</dbReference>
<dbReference type="NCBIfam" id="NF003804">
    <property type="entry name" value="PRK05395.1-1"/>
    <property type="match status" value="1"/>
</dbReference>
<dbReference type="NCBIfam" id="NF003805">
    <property type="entry name" value="PRK05395.1-2"/>
    <property type="match status" value="1"/>
</dbReference>
<dbReference type="NCBIfam" id="NF003806">
    <property type="entry name" value="PRK05395.1-3"/>
    <property type="match status" value="1"/>
</dbReference>
<dbReference type="NCBIfam" id="NF003807">
    <property type="entry name" value="PRK05395.1-4"/>
    <property type="match status" value="1"/>
</dbReference>
<dbReference type="PANTHER" id="PTHR21272">
    <property type="entry name" value="CATABOLIC 3-DEHYDROQUINASE"/>
    <property type="match status" value="1"/>
</dbReference>
<dbReference type="PANTHER" id="PTHR21272:SF3">
    <property type="entry name" value="CATABOLIC 3-DEHYDROQUINASE"/>
    <property type="match status" value="1"/>
</dbReference>
<dbReference type="Pfam" id="PF01220">
    <property type="entry name" value="DHquinase_II"/>
    <property type="match status" value="1"/>
</dbReference>
<dbReference type="PIRSF" id="PIRSF001399">
    <property type="entry name" value="DHquinase_II"/>
    <property type="match status" value="1"/>
</dbReference>
<dbReference type="SUPFAM" id="SSF52304">
    <property type="entry name" value="Type II 3-dehydroquinate dehydratase"/>
    <property type="match status" value="1"/>
</dbReference>
<dbReference type="PROSITE" id="PS01029">
    <property type="entry name" value="DEHYDROQUINASE_II"/>
    <property type="match status" value="1"/>
</dbReference>
<protein>
    <recommendedName>
        <fullName evidence="1">Catabolic 3-dehydroquinase 1</fullName>
        <shortName evidence="1">cDHQase 1</shortName>
        <ecNumber evidence="1">4.2.1.10</ecNumber>
    </recommendedName>
    <alternativeName>
        <fullName evidence="1">3-dehydroquinate dehydratase 1</fullName>
    </alternativeName>
</protein>
<evidence type="ECO:0000255" key="1">
    <source>
        <dbReference type="HAMAP-Rule" id="MF_03136"/>
    </source>
</evidence>
<name>3DHQ1_FUSV7</name>
<keyword id="KW-0456">Lyase</keyword>
<keyword id="KW-0672">Quinate metabolism</keyword>
<keyword id="KW-1185">Reference proteome</keyword>
<gene>
    <name evidence="1" type="primary">qutE1</name>
    <name type="ORF">NECHADRAFT_51144</name>
</gene>
<organism>
    <name type="scientific">Fusarium vanettenii (strain ATCC MYA-4622 / CBS 123669 / FGSC 9596 / NRRL 45880 / 77-13-4)</name>
    <name type="common">Fusarium solani subsp. pisi</name>
    <dbReference type="NCBI Taxonomy" id="660122"/>
    <lineage>
        <taxon>Eukaryota</taxon>
        <taxon>Fungi</taxon>
        <taxon>Dikarya</taxon>
        <taxon>Ascomycota</taxon>
        <taxon>Pezizomycotina</taxon>
        <taxon>Sordariomycetes</taxon>
        <taxon>Hypocreomycetidae</taxon>
        <taxon>Hypocreales</taxon>
        <taxon>Nectriaceae</taxon>
        <taxon>Fusarium</taxon>
        <taxon>Fusarium solani species complex</taxon>
        <taxon>Fusarium vanettenii</taxon>
    </lineage>
</organism>
<proteinExistence type="inferred from homology"/>
<accession>C7ZKL6</accession>
<reference key="1">
    <citation type="journal article" date="2009" name="PLoS Genet.">
        <title>The genome of Nectria haematococca: contribution of supernumerary chromosomes to gene expansion.</title>
        <authorList>
            <person name="Coleman J.J."/>
            <person name="Rounsley S.D."/>
            <person name="Rodriguez-Carres M."/>
            <person name="Kuo A."/>
            <person name="Wasmann C.C."/>
            <person name="Grimwood J."/>
            <person name="Schmutz J."/>
            <person name="Taga M."/>
            <person name="White G.J."/>
            <person name="Zhou S."/>
            <person name="Schwartz D.C."/>
            <person name="Freitag M."/>
            <person name="Ma L.-J."/>
            <person name="Danchin E.G.J."/>
            <person name="Henrissat B."/>
            <person name="Coutinho P.M."/>
            <person name="Nelson D.R."/>
            <person name="Straney D."/>
            <person name="Napoli C.A."/>
            <person name="Barker B.M."/>
            <person name="Gribskov M."/>
            <person name="Rep M."/>
            <person name="Kroken S."/>
            <person name="Molnar I."/>
            <person name="Rensing C."/>
            <person name="Kennell J.C."/>
            <person name="Zamora J."/>
            <person name="Farman M.L."/>
            <person name="Selker E.U."/>
            <person name="Salamov A."/>
            <person name="Shapiro H."/>
            <person name="Pangilinan J."/>
            <person name="Lindquist E."/>
            <person name="Lamers C."/>
            <person name="Grigoriev I.V."/>
            <person name="Geiser D.M."/>
            <person name="Covert S.F."/>
            <person name="Temporini E."/>
            <person name="VanEtten H.D."/>
        </authorList>
    </citation>
    <scope>NUCLEOTIDE SEQUENCE [LARGE SCALE GENOMIC DNA]</scope>
    <source>
        <strain>ATCC MYA-4622 / CBS 123669 / FGSC 9596 / NRRL 45880 / 77-13-4</strain>
    </source>
</reference>
<feature type="chain" id="PRO_0000402367" description="Catabolic 3-dehydroquinase 1">
    <location>
        <begin position="1"/>
        <end position="144"/>
    </location>
</feature>
<feature type="active site" description="Proton acceptor" evidence="1">
    <location>
        <position position="24"/>
    </location>
</feature>
<feature type="active site" description="Proton donor" evidence="1">
    <location>
        <position position="101"/>
    </location>
</feature>
<feature type="binding site" evidence="1">
    <location>
        <position position="75"/>
    </location>
    <ligand>
        <name>substrate</name>
    </ligand>
</feature>
<feature type="binding site" evidence="1">
    <location>
        <position position="81"/>
    </location>
    <ligand>
        <name>substrate</name>
    </ligand>
</feature>
<feature type="binding site" evidence="1">
    <location>
        <position position="88"/>
    </location>
    <ligand>
        <name>substrate</name>
    </ligand>
</feature>
<feature type="binding site" evidence="1">
    <location>
        <begin position="102"/>
        <end position="103"/>
    </location>
    <ligand>
        <name>substrate</name>
    </ligand>
</feature>
<feature type="binding site" evidence="1">
    <location>
        <position position="112"/>
    </location>
    <ligand>
        <name>substrate</name>
    </ligand>
</feature>
<feature type="site" description="Transition state stabilizer" evidence="1">
    <location>
        <position position="19"/>
    </location>
</feature>